<gene>
    <name type="primary">cph1</name>
    <name type="ordered locus">slr0473</name>
</gene>
<keyword id="KW-0002">3D-structure</keyword>
<keyword id="KW-0067">ATP-binding</keyword>
<keyword id="KW-0157">Chromophore</keyword>
<keyword id="KW-0418">Kinase</keyword>
<keyword id="KW-0547">Nucleotide-binding</keyword>
<keyword id="KW-0597">Phosphoprotein</keyword>
<keyword id="KW-0600">Photoreceptor protein</keyword>
<keyword id="KW-0675">Receptor</keyword>
<keyword id="KW-1185">Reference proteome</keyword>
<keyword id="KW-0716">Sensory transduction</keyword>
<keyword id="KW-0808">Transferase</keyword>
<dbReference type="EC" id="2.7.13.3"/>
<dbReference type="EMBL" id="BA000022">
    <property type="protein sequence ID" value="BAA10307.1"/>
    <property type="molecule type" value="Genomic_DNA"/>
</dbReference>
<dbReference type="PIR" id="S74389">
    <property type="entry name" value="S74389"/>
</dbReference>
<dbReference type="PDB" id="2VEA">
    <property type="method" value="X-ray"/>
    <property type="resolution" value="2.21 A"/>
    <property type="chains" value="A=1-514"/>
</dbReference>
<dbReference type="PDB" id="3ZQ5">
    <property type="method" value="X-ray"/>
    <property type="resolution" value="1.95 A"/>
    <property type="chains" value="A=1-514"/>
</dbReference>
<dbReference type="PDB" id="8RVX">
    <property type="method" value="X-ray"/>
    <property type="resolution" value="3.70 A"/>
    <property type="chains" value="A/B/C/D=1-514"/>
</dbReference>
<dbReference type="PDBsum" id="2VEA"/>
<dbReference type="PDBsum" id="3ZQ5"/>
<dbReference type="PDBsum" id="8RVX"/>
<dbReference type="SMR" id="Q55168"/>
<dbReference type="DIP" id="DIP-34651N"/>
<dbReference type="IntAct" id="Q55168">
    <property type="interactions" value="10"/>
</dbReference>
<dbReference type="MINT" id="Q55168"/>
<dbReference type="STRING" id="1148.gene:10499807"/>
<dbReference type="iPTMnet" id="Q55168"/>
<dbReference type="PaxDb" id="1148-1001165"/>
<dbReference type="EnsemblBacteria" id="BAA10307">
    <property type="protein sequence ID" value="BAA10307"/>
    <property type="gene ID" value="BAA10307"/>
</dbReference>
<dbReference type="KEGG" id="syn:slr0473"/>
<dbReference type="eggNOG" id="COG4251">
    <property type="taxonomic scope" value="Bacteria"/>
</dbReference>
<dbReference type="InParanoid" id="Q55168"/>
<dbReference type="PhylomeDB" id="Q55168"/>
<dbReference type="BRENDA" id="2.7.13.3">
    <property type="organism ID" value="382"/>
</dbReference>
<dbReference type="EvolutionaryTrace" id="Q55168"/>
<dbReference type="Proteomes" id="UP000001425">
    <property type="component" value="Chromosome"/>
</dbReference>
<dbReference type="GO" id="GO:0005524">
    <property type="term" value="F:ATP binding"/>
    <property type="evidence" value="ECO:0007669"/>
    <property type="project" value="UniProtKB-KW"/>
</dbReference>
<dbReference type="GO" id="GO:0042802">
    <property type="term" value="F:identical protein binding"/>
    <property type="evidence" value="ECO:0000353"/>
    <property type="project" value="IntAct"/>
</dbReference>
<dbReference type="GO" id="GO:0000155">
    <property type="term" value="F:phosphorelay sensor kinase activity"/>
    <property type="evidence" value="ECO:0007669"/>
    <property type="project" value="InterPro"/>
</dbReference>
<dbReference type="GO" id="GO:0004673">
    <property type="term" value="F:protein histidine kinase activity"/>
    <property type="evidence" value="ECO:0000314"/>
    <property type="project" value="UniProtKB"/>
</dbReference>
<dbReference type="GO" id="GO:0009883">
    <property type="term" value="F:red or far-red light photoreceptor activity"/>
    <property type="evidence" value="ECO:0000314"/>
    <property type="project" value="UniProtKB"/>
</dbReference>
<dbReference type="GO" id="GO:0009584">
    <property type="term" value="P:detection of visible light"/>
    <property type="evidence" value="ECO:0007669"/>
    <property type="project" value="InterPro"/>
</dbReference>
<dbReference type="GO" id="GO:0046777">
    <property type="term" value="P:protein autophosphorylation"/>
    <property type="evidence" value="ECO:0000314"/>
    <property type="project" value="UniProtKB"/>
</dbReference>
<dbReference type="GO" id="GO:0009585">
    <property type="term" value="P:red, far-red light phototransduction"/>
    <property type="evidence" value="ECO:0000314"/>
    <property type="project" value="UniProtKB"/>
</dbReference>
<dbReference type="GO" id="GO:0006355">
    <property type="term" value="P:regulation of DNA-templated transcription"/>
    <property type="evidence" value="ECO:0007669"/>
    <property type="project" value="InterPro"/>
</dbReference>
<dbReference type="GO" id="GO:0009639">
    <property type="term" value="P:response to red or far red light"/>
    <property type="evidence" value="ECO:0000314"/>
    <property type="project" value="UniProtKB"/>
</dbReference>
<dbReference type="CDD" id="cd16921">
    <property type="entry name" value="HATPase_FilI-like"/>
    <property type="match status" value="1"/>
</dbReference>
<dbReference type="CDD" id="cd00082">
    <property type="entry name" value="HisKA"/>
    <property type="match status" value="1"/>
</dbReference>
<dbReference type="CDD" id="cd00130">
    <property type="entry name" value="PAS"/>
    <property type="match status" value="1"/>
</dbReference>
<dbReference type="FunFam" id="3.30.565.10:FF:000006">
    <property type="entry name" value="Sensor histidine kinase WalK"/>
    <property type="match status" value="1"/>
</dbReference>
<dbReference type="Gene3D" id="1.10.287.130">
    <property type="match status" value="1"/>
</dbReference>
<dbReference type="Gene3D" id="3.30.450.270">
    <property type="match status" value="1"/>
</dbReference>
<dbReference type="Gene3D" id="3.30.450.40">
    <property type="match status" value="1"/>
</dbReference>
<dbReference type="Gene3D" id="3.30.565.10">
    <property type="entry name" value="Histidine kinase-like ATPase, C-terminal domain"/>
    <property type="match status" value="1"/>
</dbReference>
<dbReference type="Gene3D" id="3.30.450.20">
    <property type="entry name" value="PAS domain"/>
    <property type="match status" value="1"/>
</dbReference>
<dbReference type="InterPro" id="IPR003018">
    <property type="entry name" value="GAF"/>
</dbReference>
<dbReference type="InterPro" id="IPR029016">
    <property type="entry name" value="GAF-like_dom_sf"/>
</dbReference>
<dbReference type="InterPro" id="IPR036890">
    <property type="entry name" value="HATPase_C_sf"/>
</dbReference>
<dbReference type="InterPro" id="IPR005467">
    <property type="entry name" value="His_kinase_dom"/>
</dbReference>
<dbReference type="InterPro" id="IPR003661">
    <property type="entry name" value="HisK_dim/P_dom"/>
</dbReference>
<dbReference type="InterPro" id="IPR036097">
    <property type="entry name" value="HisK_dim/P_sf"/>
</dbReference>
<dbReference type="InterPro" id="IPR000014">
    <property type="entry name" value="PAS"/>
</dbReference>
<dbReference type="InterPro" id="IPR035965">
    <property type="entry name" value="PAS-like_dom_sf"/>
</dbReference>
<dbReference type="InterPro" id="IPR013654">
    <property type="entry name" value="PAS_2"/>
</dbReference>
<dbReference type="InterPro" id="IPR016132">
    <property type="entry name" value="Phyto_chromo_attachment"/>
</dbReference>
<dbReference type="InterPro" id="IPR001294">
    <property type="entry name" value="Phytochrome"/>
</dbReference>
<dbReference type="InterPro" id="IPR013515">
    <property type="entry name" value="Phytochrome_cen-reg"/>
</dbReference>
<dbReference type="InterPro" id="IPR043150">
    <property type="entry name" value="Phytochrome_PHY_sf"/>
</dbReference>
<dbReference type="InterPro" id="IPR052162">
    <property type="entry name" value="Sensor_kinase/Photoreceptor"/>
</dbReference>
<dbReference type="PANTHER" id="PTHR43304:SF1">
    <property type="entry name" value="PAC DOMAIN-CONTAINING PROTEIN"/>
    <property type="match status" value="1"/>
</dbReference>
<dbReference type="PANTHER" id="PTHR43304">
    <property type="entry name" value="PHYTOCHROME-LIKE PROTEIN CPH1"/>
    <property type="match status" value="1"/>
</dbReference>
<dbReference type="Pfam" id="PF01590">
    <property type="entry name" value="GAF"/>
    <property type="match status" value="1"/>
</dbReference>
<dbReference type="Pfam" id="PF02518">
    <property type="entry name" value="HATPase_c"/>
    <property type="match status" value="1"/>
</dbReference>
<dbReference type="Pfam" id="PF00512">
    <property type="entry name" value="HisKA"/>
    <property type="match status" value="1"/>
</dbReference>
<dbReference type="Pfam" id="PF08446">
    <property type="entry name" value="PAS_2"/>
    <property type="match status" value="1"/>
</dbReference>
<dbReference type="Pfam" id="PF00360">
    <property type="entry name" value="PHY"/>
    <property type="match status" value="1"/>
</dbReference>
<dbReference type="PRINTS" id="PR01033">
    <property type="entry name" value="PHYTOCHROME"/>
</dbReference>
<dbReference type="SMART" id="SM00065">
    <property type="entry name" value="GAF"/>
    <property type="match status" value="1"/>
</dbReference>
<dbReference type="SMART" id="SM00387">
    <property type="entry name" value="HATPase_c"/>
    <property type="match status" value="1"/>
</dbReference>
<dbReference type="SMART" id="SM00388">
    <property type="entry name" value="HisKA"/>
    <property type="match status" value="1"/>
</dbReference>
<dbReference type="SMART" id="SM00091">
    <property type="entry name" value="PAS"/>
    <property type="match status" value="1"/>
</dbReference>
<dbReference type="SUPFAM" id="SSF55874">
    <property type="entry name" value="ATPase domain of HSP90 chaperone/DNA topoisomerase II/histidine kinase"/>
    <property type="match status" value="1"/>
</dbReference>
<dbReference type="SUPFAM" id="SSF55781">
    <property type="entry name" value="GAF domain-like"/>
    <property type="match status" value="2"/>
</dbReference>
<dbReference type="SUPFAM" id="SSF47384">
    <property type="entry name" value="Homodimeric domain of signal transducing histidine kinase"/>
    <property type="match status" value="1"/>
</dbReference>
<dbReference type="SUPFAM" id="SSF55785">
    <property type="entry name" value="PYP-like sensor domain (PAS domain)"/>
    <property type="match status" value="1"/>
</dbReference>
<dbReference type="PROSITE" id="PS50109">
    <property type="entry name" value="HIS_KIN"/>
    <property type="match status" value="1"/>
</dbReference>
<dbReference type="PROSITE" id="PS50046">
    <property type="entry name" value="PHYTOCHROME_2"/>
    <property type="match status" value="1"/>
</dbReference>
<name>PHY1_SYNY3</name>
<feature type="chain" id="PRO_0000172001" description="Phytochrome-like protein Cph1">
    <location>
        <begin position="1"/>
        <end position="748"/>
    </location>
</feature>
<feature type="domain" description="PAS">
    <location>
        <begin position="19"/>
        <end position="86"/>
    </location>
</feature>
<feature type="domain" description="GAF">
    <location>
        <begin position="152"/>
        <end position="320"/>
    </location>
</feature>
<feature type="domain" description="Histidine kinase" evidence="2">
    <location>
        <begin position="535"/>
        <end position="748"/>
    </location>
</feature>
<feature type="region of interest" description="Chromophore binding domain">
    <location>
        <begin position="87"/>
        <end position="510"/>
    </location>
</feature>
<feature type="binding site" description="covalent" evidence="1">
    <location>
        <position position="259"/>
    </location>
    <ligand>
        <name>a tetrapyrrole</name>
        <dbReference type="ChEBI" id="CHEBI:26932"/>
    </ligand>
</feature>
<feature type="modified residue" description="Phosphohistidine; by autocatalysis" evidence="2 3">
    <location>
        <position position="538"/>
    </location>
</feature>
<feature type="mutagenesis site" description="No autophosphorylation; no phosphotransfer to Rcp1." evidence="3">
    <original>H</original>
    <variation>K</variation>
    <location>
        <position position="538"/>
    </location>
</feature>
<feature type="helix" evidence="6">
    <location>
        <begin position="9"/>
        <end position="16"/>
    </location>
</feature>
<feature type="helix" evidence="6">
    <location>
        <begin position="20"/>
        <end position="22"/>
    </location>
</feature>
<feature type="strand" evidence="6">
    <location>
        <begin position="30"/>
        <end position="36"/>
    </location>
</feature>
<feature type="turn" evidence="6">
    <location>
        <begin position="37"/>
        <end position="40"/>
    </location>
</feature>
<feature type="strand" evidence="6">
    <location>
        <begin position="41"/>
        <end position="46"/>
    </location>
</feature>
<feature type="helix" evidence="6">
    <location>
        <begin position="49"/>
        <end position="53"/>
    </location>
</feature>
<feature type="helix" evidence="6">
    <location>
        <begin position="57"/>
        <end position="60"/>
    </location>
</feature>
<feature type="helix" evidence="6">
    <location>
        <begin position="65"/>
        <end position="68"/>
    </location>
</feature>
<feature type="strand" evidence="6">
    <location>
        <begin position="70"/>
        <end position="73"/>
    </location>
</feature>
<feature type="helix" evidence="6">
    <location>
        <begin position="83"/>
        <end position="88"/>
    </location>
</feature>
<feature type="strand" evidence="6">
    <location>
        <begin position="90"/>
        <end position="98"/>
    </location>
</feature>
<feature type="turn" evidence="6">
    <location>
        <begin position="99"/>
        <end position="101"/>
    </location>
</feature>
<feature type="strand" evidence="6">
    <location>
        <begin position="102"/>
        <end position="112"/>
    </location>
</feature>
<feature type="strand" evidence="6">
    <location>
        <begin position="118"/>
        <end position="124"/>
    </location>
</feature>
<feature type="helix" evidence="6">
    <location>
        <begin position="136"/>
        <end position="149"/>
    </location>
</feature>
<feature type="helix" evidence="6">
    <location>
        <begin position="153"/>
        <end position="168"/>
    </location>
</feature>
<feature type="strand" evidence="6">
    <location>
        <begin position="171"/>
        <end position="178"/>
    </location>
</feature>
<feature type="strand" evidence="6">
    <location>
        <begin position="184"/>
        <end position="191"/>
    </location>
</feature>
<feature type="strand" evidence="6">
    <location>
        <begin position="201"/>
        <end position="203"/>
    </location>
</feature>
<feature type="helix" evidence="6">
    <location>
        <begin position="205"/>
        <end position="207"/>
    </location>
</feature>
<feature type="helix" evidence="6">
    <location>
        <begin position="210"/>
        <end position="218"/>
    </location>
</feature>
<feature type="strand" evidence="6">
    <location>
        <begin position="221"/>
        <end position="225"/>
    </location>
</feature>
<feature type="strand" evidence="5">
    <location>
        <begin position="227"/>
        <end position="229"/>
    </location>
</feature>
<feature type="strand" evidence="6">
    <location>
        <begin position="232"/>
        <end position="238"/>
    </location>
</feature>
<feature type="turn" evidence="6">
    <location>
        <begin position="240"/>
        <end position="242"/>
    </location>
</feature>
<feature type="strand" evidence="6">
    <location>
        <begin position="252"/>
        <end position="254"/>
    </location>
</feature>
<feature type="helix" evidence="6">
    <location>
        <begin position="258"/>
        <end position="266"/>
    </location>
</feature>
<feature type="strand" evidence="6">
    <location>
        <begin position="270"/>
        <end position="279"/>
    </location>
</feature>
<feature type="strand" evidence="6">
    <location>
        <begin position="282"/>
        <end position="293"/>
    </location>
</feature>
<feature type="helix" evidence="6">
    <location>
        <begin position="299"/>
        <end position="344"/>
    </location>
</feature>
<feature type="strand" evidence="6">
    <location>
        <begin position="345"/>
        <end position="347"/>
    </location>
</feature>
<feature type="helix" evidence="6">
    <location>
        <begin position="348"/>
        <end position="353"/>
    </location>
</feature>
<feature type="helix" evidence="6">
    <location>
        <begin position="356"/>
        <end position="361"/>
    </location>
</feature>
<feature type="turn" evidence="6">
    <location>
        <begin position="362"/>
        <end position="364"/>
    </location>
</feature>
<feature type="strand" evidence="6">
    <location>
        <begin position="366"/>
        <end position="372"/>
    </location>
</feature>
<feature type="strand" evidence="6">
    <location>
        <begin position="375"/>
        <end position="381"/>
    </location>
</feature>
<feature type="helix" evidence="6">
    <location>
        <begin position="385"/>
        <end position="397"/>
    </location>
</feature>
<feature type="strand" evidence="6">
    <location>
        <begin position="404"/>
        <end position="407"/>
    </location>
</feature>
<feature type="helix" evidence="6">
    <location>
        <begin position="409"/>
        <end position="411"/>
    </location>
</feature>
<feature type="helix" evidence="6">
    <location>
        <begin position="414"/>
        <end position="419"/>
    </location>
</feature>
<feature type="helix" evidence="6">
    <location>
        <begin position="420"/>
        <end position="423"/>
    </location>
</feature>
<feature type="strand" evidence="6">
    <location>
        <begin position="424"/>
        <end position="431"/>
    </location>
</feature>
<feature type="turn" evidence="6">
    <location>
        <begin position="432"/>
        <end position="434"/>
    </location>
</feature>
<feature type="strand" evidence="6">
    <location>
        <begin position="435"/>
        <end position="441"/>
    </location>
</feature>
<feature type="strand" evidence="6">
    <location>
        <begin position="446"/>
        <end position="452"/>
    </location>
</feature>
<feature type="helix" evidence="6">
    <location>
        <begin position="454"/>
        <end position="456"/>
    </location>
</feature>
<feature type="strand" evidence="6">
    <location>
        <begin position="458"/>
        <end position="463"/>
    </location>
</feature>
<feature type="strand" evidence="6">
    <location>
        <begin position="466"/>
        <end position="470"/>
    </location>
</feature>
<feature type="strand" evidence="6">
    <location>
        <begin position="478"/>
        <end position="482"/>
    </location>
</feature>
<feature type="helix" evidence="6">
    <location>
        <begin position="491"/>
        <end position="514"/>
    </location>
</feature>
<organism>
    <name type="scientific">Synechocystis sp. (strain ATCC 27184 / PCC 6803 / Kazusa)</name>
    <dbReference type="NCBI Taxonomy" id="1111708"/>
    <lineage>
        <taxon>Bacteria</taxon>
        <taxon>Bacillati</taxon>
        <taxon>Cyanobacteriota</taxon>
        <taxon>Cyanophyceae</taxon>
        <taxon>Synechococcales</taxon>
        <taxon>Merismopediaceae</taxon>
        <taxon>Synechocystis</taxon>
    </lineage>
</organism>
<reference key="1">
    <citation type="journal article" date="1995" name="DNA Res.">
        <title>Sequence analysis of the genome of the unicellular cyanobacterium Synechocystis sp. strain PCC6803. I. Sequence features in the 1 Mb region from map positions 64% to 92% of the genome.</title>
        <authorList>
            <person name="Kaneko T."/>
            <person name="Tanaka A."/>
            <person name="Sato S."/>
            <person name="Kotani H."/>
            <person name="Sazuka T."/>
            <person name="Miyajima N."/>
            <person name="Sugiura M."/>
            <person name="Tabata S."/>
        </authorList>
    </citation>
    <scope>NUCLEOTIDE SEQUENCE [LARGE SCALE GENOMIC DNA]</scope>
    <source>
        <strain>ATCC 27184 / PCC 6803 / N-1</strain>
    </source>
</reference>
<reference key="2">
    <citation type="journal article" date="1996" name="DNA Res.">
        <title>Sequence analysis of the genome of the unicellular cyanobacterium Synechocystis sp. strain PCC6803. II. Sequence determination of the entire genome and assignment of potential protein-coding regions.</title>
        <authorList>
            <person name="Kaneko T."/>
            <person name="Sato S."/>
            <person name="Kotani H."/>
            <person name="Tanaka A."/>
            <person name="Asamizu E."/>
            <person name="Nakamura Y."/>
            <person name="Miyajima N."/>
            <person name="Hirosawa M."/>
            <person name="Sugiura M."/>
            <person name="Sasamoto S."/>
            <person name="Kimura T."/>
            <person name="Hosouchi T."/>
            <person name="Matsuno A."/>
            <person name="Muraki A."/>
            <person name="Nakazaki N."/>
            <person name="Naruo K."/>
            <person name="Okumura S."/>
            <person name="Shimpo S."/>
            <person name="Takeuchi C."/>
            <person name="Wada T."/>
            <person name="Watanabe A."/>
            <person name="Yamada M."/>
            <person name="Yasuda M."/>
            <person name="Tabata S."/>
        </authorList>
    </citation>
    <scope>NUCLEOTIDE SEQUENCE [LARGE SCALE GENOMIC DNA]</scope>
    <source>
        <strain>ATCC 27184 / PCC 6803 / Kazusa</strain>
    </source>
</reference>
<reference key="3">
    <citation type="journal article" date="1997" name="Nature">
        <title>A prokaryotic phytochrome.</title>
        <authorList>
            <person name="Hughes J."/>
            <person name="Lamparter T."/>
            <person name="Mittmann F."/>
            <person name="Hartmann E."/>
            <person name="Gartner W."/>
            <person name="Wilde A."/>
            <person name="Borner T."/>
        </authorList>
    </citation>
    <scope>CHARACTERIZATION</scope>
</reference>
<reference key="4">
    <citation type="journal article" date="1997" name="Science">
        <title>A cyanobacterial phytochrome two-component light sensory system.</title>
        <authorList>
            <person name="Yeh K.-C."/>
            <person name="Wu S.-H."/>
            <person name="Murphy J.T."/>
            <person name="Lagarias J.C."/>
        </authorList>
    </citation>
    <scope>CHARACTERIZATION</scope>
    <scope>PHOSPHORYLATION AT HIS-538</scope>
    <scope>MUTAGENESIS OF HIS-538</scope>
</reference>
<reference key="5">
    <citation type="journal article" date="2000" name="Biochemistry">
        <title>Chromophore-apoprotein interactions in Synechocystis sp. PCC6803 phytochrome Cph1.</title>
        <authorList>
            <person name="Park C.-M."/>
            <person name="Shim J.-Y."/>
            <person name="Yang S.-S."/>
            <person name="Kang J.-G."/>
            <person name="Kim J.-I."/>
            <person name="Luka Z."/>
            <person name="Song P.-S."/>
        </authorList>
    </citation>
    <scope>CHARACTERIZATION</scope>
</reference>
<reference key="6">
    <citation type="journal article" date="1999" name="Plant Physiol.">
        <title>Prokaryotes and phytochrome. The connection to chromophores and signaling.</title>
        <authorList>
            <person name="Hughes J."/>
            <person name="Lamparter T."/>
        </authorList>
    </citation>
    <scope>REVIEW</scope>
</reference>
<protein>
    <recommendedName>
        <fullName>Phytochrome-like protein Cph1</fullName>
        <ecNumber>2.7.13.3</ecNumber>
    </recommendedName>
    <alternativeName>
        <fullName>Bacteriophytochrome Cph1</fullName>
    </alternativeName>
    <alternativeName>
        <fullName>Light-regulated histidine kinase 1</fullName>
    </alternativeName>
</protein>
<proteinExistence type="evidence at protein level"/>
<accession>Q55168</accession>
<comment type="function">
    <text>Regulatory photoreceptor which exists in two forms that are reversibly interconvertible by light: the R form that absorbs maximally in the red region of the spectrum and the FR form that absorbs maximally in the far-red region. Also has a slight blue shift for the far-red maximum. Forms a two-component system with the Rrcp1 response regulator.</text>
</comment>
<comment type="catalytic activity">
    <reaction>
        <text>ATP + protein L-histidine = ADP + protein N-phospho-L-histidine.</text>
        <dbReference type="EC" id="2.7.13.3"/>
    </reaction>
</comment>
<comment type="subunit">
    <text>Homodimer.</text>
</comment>
<comment type="interaction">
    <interactant intactId="EBI-594457">
        <id>Q55168</id>
    </interactant>
    <interactant intactId="EBI-594457">
        <id>Q55168</id>
        <label>cph1</label>
    </interactant>
    <organismsDiffer>false</organismsDiffer>
    <experiments>8</experiments>
</comment>
<comment type="interaction">
    <interactant intactId="EBI-594457">
        <id>Q55168</id>
    </interactant>
    <interactant intactId="EBI-766949">
        <id>Q55169</id>
        <label>rcp1</label>
    </interactant>
    <organismsDiffer>false</organismsDiffer>
    <experiments>2</experiments>
</comment>
<comment type="PTM">
    <text evidence="1">Contains one covalently linked tetrapyrrole chromophore.</text>
</comment>
<comment type="miscellaneous">
    <text>The R form exhibits both ATP-dependent autophosphorylation and phosphotransfer to Rcp1 activities. Unlike the higher plants where Pfr is thought to be the active form.</text>
</comment>
<comment type="similarity">
    <text evidence="4">In the N-terminal section; belongs to the phytochrome family.</text>
</comment>
<evidence type="ECO:0000250" key="1"/>
<evidence type="ECO:0000255" key="2">
    <source>
        <dbReference type="PROSITE-ProRule" id="PRU00107"/>
    </source>
</evidence>
<evidence type="ECO:0000269" key="3">
    <source>
    </source>
</evidence>
<evidence type="ECO:0000305" key="4"/>
<evidence type="ECO:0007829" key="5">
    <source>
        <dbReference type="PDB" id="2VEA"/>
    </source>
</evidence>
<evidence type="ECO:0007829" key="6">
    <source>
        <dbReference type="PDB" id="3ZQ5"/>
    </source>
</evidence>
<sequence>MATTVQLSDQSLRQLETLAIHTAHLIQPHGLVVVLQEPDLTISQISANCTGILGRSPEDLLGRTLGEVFDSFQIDPIQSRLTAGQISSLNPSKLWARVMGDDFVIFDGVFHRNSDGLLVCELEPAYTSDNLPFLGFYHMANAALNRLRQQANLRDFYDVIVEEVRRMTGFDRVMLYRFDENNHGDVIAEDKRDDMEPYLGLHYPESDIPQPARRLFIHNPIRVIPDVYGVAVPLTPAVNPSTNRAVDLTESILRSAYHCHLTYLKNMGVGASLTISLIKDGHLWGLIACHHQTPKVIPFELRKACEFFGRVVFSNISAQEDTETFDYRVQLAEHEAVLLDKMTTAADFVEGLTNHPDRLLGLTGSQGAAICFGEKLILVGETPDEKAVQYLLQWLENREVQDVFFTSSLSQIYPDAVNFKSVASGLLAIPIARHNFLLWFRPEVLQTVNWGGDPNHAYEATQEDGKIELHPRQSFDLWKEIVRLQSLPWQSVEIQSALALKKAIVNLILRQAEELAQLARNLERSNADLKKFAYIASHDLQEPLNQVSNYVQLLEMRYSEALDEDAKDFIDFAVTGVSLMQTLIDDILTYAKVDTQYAQLTFTDVQEVVDKALANLKQRIEESGAEIEVGSMPAVMADQIQLMQVFQNLIANGIKFAGDKSPKIKIWGDRQEDAWVFAVQDNGIGIDPQFFERIFVIFQRLHTRDEYKGTGMGLAICKKIIEGHQGQIWLESNPGEGSTFYFSIPIGN</sequence>